<dbReference type="EMBL" id="AE015925">
    <property type="protein sequence ID" value="AAP04775.1"/>
    <property type="molecule type" value="Genomic_DNA"/>
</dbReference>
<dbReference type="RefSeq" id="WP_011005996.1">
    <property type="nucleotide sequence ID" value="NC_003361.3"/>
</dbReference>
<dbReference type="SMR" id="Q824W6"/>
<dbReference type="STRING" id="227941.CCA_00022"/>
<dbReference type="KEGG" id="cca:CCA_00022"/>
<dbReference type="eggNOG" id="COG1837">
    <property type="taxonomic scope" value="Bacteria"/>
</dbReference>
<dbReference type="HOGENOM" id="CLU_132074_1_0_0"/>
<dbReference type="OrthoDB" id="9812389at2"/>
<dbReference type="Proteomes" id="UP000002193">
    <property type="component" value="Chromosome"/>
</dbReference>
<dbReference type="GO" id="GO:0005737">
    <property type="term" value="C:cytoplasm"/>
    <property type="evidence" value="ECO:0007669"/>
    <property type="project" value="UniProtKB-SubCell"/>
</dbReference>
<dbReference type="GO" id="GO:0003723">
    <property type="term" value="F:RNA binding"/>
    <property type="evidence" value="ECO:0007669"/>
    <property type="project" value="UniProtKB-UniRule"/>
</dbReference>
<dbReference type="CDD" id="cd22533">
    <property type="entry name" value="KH-II_YlqC-like"/>
    <property type="match status" value="1"/>
</dbReference>
<dbReference type="Gene3D" id="3.30.300.20">
    <property type="match status" value="1"/>
</dbReference>
<dbReference type="HAMAP" id="MF_00088">
    <property type="entry name" value="KhpA"/>
    <property type="match status" value="1"/>
</dbReference>
<dbReference type="InterPro" id="IPR015946">
    <property type="entry name" value="KH_dom-like_a/b"/>
</dbReference>
<dbReference type="InterPro" id="IPR009019">
    <property type="entry name" value="KH_sf_prok-type"/>
</dbReference>
<dbReference type="InterPro" id="IPR020627">
    <property type="entry name" value="KhpA"/>
</dbReference>
<dbReference type="NCBIfam" id="NF002201">
    <property type="entry name" value="PRK01064.1"/>
    <property type="match status" value="1"/>
</dbReference>
<dbReference type="PANTHER" id="PTHR34654:SF1">
    <property type="entry name" value="RNA-BINDING PROTEIN KHPA"/>
    <property type="match status" value="1"/>
</dbReference>
<dbReference type="PANTHER" id="PTHR34654">
    <property type="entry name" value="UPF0109 PROTEIN SCO5592"/>
    <property type="match status" value="1"/>
</dbReference>
<dbReference type="Pfam" id="PF13083">
    <property type="entry name" value="KH_KhpA-B"/>
    <property type="match status" value="1"/>
</dbReference>
<dbReference type="SUPFAM" id="SSF54814">
    <property type="entry name" value="Prokaryotic type KH domain (KH-domain type II)"/>
    <property type="match status" value="1"/>
</dbReference>
<dbReference type="PROSITE" id="PS50084">
    <property type="entry name" value="KH_TYPE_1"/>
    <property type="match status" value="1"/>
</dbReference>
<accession>Q824W6</accession>
<evidence type="ECO:0000255" key="1">
    <source>
        <dbReference type="HAMAP-Rule" id="MF_00088"/>
    </source>
</evidence>
<feature type="chain" id="PRO_0000163218" description="RNA-binding protein KhpA">
    <location>
        <begin position="1"/>
        <end position="78"/>
    </location>
</feature>
<feature type="domain" description="KH" evidence="1">
    <location>
        <begin position="29"/>
        <end position="78"/>
    </location>
</feature>
<proteinExistence type="inferred from homology"/>
<comment type="function">
    <text evidence="1">A probable RNA-binding protein.</text>
</comment>
<comment type="subcellular location">
    <subcellularLocation>
        <location evidence="1">Cytoplasm</location>
    </subcellularLocation>
</comment>
<comment type="similarity">
    <text evidence="1">Belongs to the KhpA RNA-binding protein family.</text>
</comment>
<gene>
    <name evidence="1" type="primary">khpA</name>
    <name type="ordered locus">CCA_00022</name>
</gene>
<sequence>MKDFLAYIIKNLVDRPEEVHIKEVQGTHTIIYELTVAKPDIGKIIGKEGRTIKAIRTLLVSVASRNNVKVSLEIMEDK</sequence>
<keyword id="KW-0963">Cytoplasm</keyword>
<keyword id="KW-0694">RNA-binding</keyword>
<name>KHPA_CHLCV</name>
<reference key="1">
    <citation type="journal article" date="2003" name="Nucleic Acids Res.">
        <title>Genome sequence of Chlamydophila caviae (Chlamydia psittaci GPIC): examining the role of niche-specific genes in the evolution of the Chlamydiaceae.</title>
        <authorList>
            <person name="Read T.D."/>
            <person name="Myers G.S.A."/>
            <person name="Brunham R.C."/>
            <person name="Nelson W.C."/>
            <person name="Paulsen I.T."/>
            <person name="Heidelberg J.F."/>
            <person name="Holtzapple E.K."/>
            <person name="Khouri H.M."/>
            <person name="Federova N.B."/>
            <person name="Carty H.A."/>
            <person name="Umayam L.A."/>
            <person name="Haft D.H."/>
            <person name="Peterson J.D."/>
            <person name="Beanan M.J."/>
            <person name="White O."/>
            <person name="Salzberg S.L."/>
            <person name="Hsia R.-C."/>
            <person name="McClarty G."/>
            <person name="Rank R.G."/>
            <person name="Bavoil P.M."/>
            <person name="Fraser C.M."/>
        </authorList>
    </citation>
    <scope>NUCLEOTIDE SEQUENCE [LARGE SCALE GENOMIC DNA]</scope>
    <source>
        <strain>ATCC VR-813 / DSM 19441 / 03DC25 / GPIC</strain>
    </source>
</reference>
<protein>
    <recommendedName>
        <fullName evidence="1">RNA-binding protein KhpA</fullName>
    </recommendedName>
    <alternativeName>
        <fullName evidence="1">KH-domain protein A</fullName>
    </alternativeName>
</protein>
<organism>
    <name type="scientific">Chlamydia caviae (strain ATCC VR-813 / DSM 19441 / 03DC25 / GPIC)</name>
    <name type="common">Chlamydophila caviae</name>
    <dbReference type="NCBI Taxonomy" id="227941"/>
    <lineage>
        <taxon>Bacteria</taxon>
        <taxon>Pseudomonadati</taxon>
        <taxon>Chlamydiota</taxon>
        <taxon>Chlamydiia</taxon>
        <taxon>Chlamydiales</taxon>
        <taxon>Chlamydiaceae</taxon>
        <taxon>Chlamydia/Chlamydophila group</taxon>
        <taxon>Chlamydia</taxon>
    </lineage>
</organism>